<name>U496A_ARATH</name>
<evidence type="ECO:0000255" key="1"/>
<evidence type="ECO:0000305" key="2"/>
<keyword id="KW-0472">Membrane</keyword>
<keyword id="KW-1185">Reference proteome</keyword>
<keyword id="KW-0812">Transmembrane</keyword>
<keyword id="KW-1133">Transmembrane helix</keyword>
<feature type="chain" id="PRO_0000306886" description="UPF0496 protein At4g34320">
    <location>
        <begin position="1"/>
        <end position="374"/>
    </location>
</feature>
<feature type="transmembrane region" description="Helical" evidence="1">
    <location>
        <begin position="215"/>
        <end position="235"/>
    </location>
</feature>
<feature type="transmembrane region" description="Helical" evidence="1">
    <location>
        <begin position="238"/>
        <end position="258"/>
    </location>
</feature>
<sequence>MGNQTSKKSQETSAKSVHYTTELRSYAAACKADTELQSFDTCLQARTSHVISTLATGVEVRALSFDSLKEVTQCLLEMNQEVVKVILDCKKDIWKNQEMFELVEDYFENSLKTLDFCAALEKGLRRARDSHLLILVALQQFEDESLVQGGNGYKKTLEELKNFKDAESPFNEDFFKMFQSVYKQQMLMLEKLQHRKNKLDKKLKCIHTWRKLSSIIFVATFATVLICSVVAAAMAAPPVAAALAAATAVPLGSMGKWIDSLWKNYENALKGQKEVISSMQAGTFVAVKDLDNIRVLIERLEIEITGMVKSAEFAVEHNAVKIGIDDIKKKLEVFKKNVEELGTQADLCSRDIRRARTVILQRIIKHPNNASSST</sequence>
<reference key="1">
    <citation type="journal article" date="1999" name="Nature">
        <title>Sequence and analysis of chromosome 4 of the plant Arabidopsis thaliana.</title>
        <authorList>
            <person name="Mayer K.F.X."/>
            <person name="Schueller C."/>
            <person name="Wambutt R."/>
            <person name="Murphy G."/>
            <person name="Volckaert G."/>
            <person name="Pohl T."/>
            <person name="Duesterhoeft A."/>
            <person name="Stiekema W."/>
            <person name="Entian K.-D."/>
            <person name="Terryn N."/>
            <person name="Harris B."/>
            <person name="Ansorge W."/>
            <person name="Brandt P."/>
            <person name="Grivell L.A."/>
            <person name="Rieger M."/>
            <person name="Weichselgartner M."/>
            <person name="de Simone V."/>
            <person name="Obermaier B."/>
            <person name="Mache R."/>
            <person name="Mueller M."/>
            <person name="Kreis M."/>
            <person name="Delseny M."/>
            <person name="Puigdomenech P."/>
            <person name="Watson M."/>
            <person name="Schmidtheini T."/>
            <person name="Reichert B."/>
            <person name="Portetelle D."/>
            <person name="Perez-Alonso M."/>
            <person name="Boutry M."/>
            <person name="Bancroft I."/>
            <person name="Vos P."/>
            <person name="Hoheisel J."/>
            <person name="Zimmermann W."/>
            <person name="Wedler H."/>
            <person name="Ridley P."/>
            <person name="Langham S.-A."/>
            <person name="McCullagh B."/>
            <person name="Bilham L."/>
            <person name="Robben J."/>
            <person name="van der Schueren J."/>
            <person name="Grymonprez B."/>
            <person name="Chuang Y.-J."/>
            <person name="Vandenbussche F."/>
            <person name="Braeken M."/>
            <person name="Weltjens I."/>
            <person name="Voet M."/>
            <person name="Bastiaens I."/>
            <person name="Aert R."/>
            <person name="Defoor E."/>
            <person name="Weitzenegger T."/>
            <person name="Bothe G."/>
            <person name="Ramsperger U."/>
            <person name="Hilbert H."/>
            <person name="Braun M."/>
            <person name="Holzer E."/>
            <person name="Brandt A."/>
            <person name="Peters S."/>
            <person name="van Staveren M."/>
            <person name="Dirkse W."/>
            <person name="Mooijman P."/>
            <person name="Klein Lankhorst R."/>
            <person name="Rose M."/>
            <person name="Hauf J."/>
            <person name="Koetter P."/>
            <person name="Berneiser S."/>
            <person name="Hempel S."/>
            <person name="Feldpausch M."/>
            <person name="Lamberth S."/>
            <person name="Van den Daele H."/>
            <person name="De Keyser A."/>
            <person name="Buysshaert C."/>
            <person name="Gielen J."/>
            <person name="Villarroel R."/>
            <person name="De Clercq R."/>
            <person name="van Montagu M."/>
            <person name="Rogers J."/>
            <person name="Cronin A."/>
            <person name="Quail M.A."/>
            <person name="Bray-Allen S."/>
            <person name="Clark L."/>
            <person name="Doggett J."/>
            <person name="Hall S."/>
            <person name="Kay M."/>
            <person name="Lennard N."/>
            <person name="McLay K."/>
            <person name="Mayes R."/>
            <person name="Pettett A."/>
            <person name="Rajandream M.A."/>
            <person name="Lyne M."/>
            <person name="Benes V."/>
            <person name="Rechmann S."/>
            <person name="Borkova D."/>
            <person name="Bloecker H."/>
            <person name="Scharfe M."/>
            <person name="Grimm M."/>
            <person name="Loehnert T.-H."/>
            <person name="Dose S."/>
            <person name="de Haan M."/>
            <person name="Maarse A.C."/>
            <person name="Schaefer M."/>
            <person name="Mueller-Auer S."/>
            <person name="Gabel C."/>
            <person name="Fuchs M."/>
            <person name="Fartmann B."/>
            <person name="Granderath K."/>
            <person name="Dauner D."/>
            <person name="Herzl A."/>
            <person name="Neumann S."/>
            <person name="Argiriou A."/>
            <person name="Vitale D."/>
            <person name="Liguori R."/>
            <person name="Piravandi E."/>
            <person name="Massenet O."/>
            <person name="Quigley F."/>
            <person name="Clabauld G."/>
            <person name="Muendlein A."/>
            <person name="Felber R."/>
            <person name="Schnabl S."/>
            <person name="Hiller R."/>
            <person name="Schmidt W."/>
            <person name="Lecharny A."/>
            <person name="Aubourg S."/>
            <person name="Chefdor F."/>
            <person name="Cooke R."/>
            <person name="Berger C."/>
            <person name="Monfort A."/>
            <person name="Casacuberta E."/>
            <person name="Gibbons T."/>
            <person name="Weber N."/>
            <person name="Vandenbol M."/>
            <person name="Bargues M."/>
            <person name="Terol J."/>
            <person name="Torres A."/>
            <person name="Perez-Perez A."/>
            <person name="Purnelle B."/>
            <person name="Bent E."/>
            <person name="Johnson S."/>
            <person name="Tacon D."/>
            <person name="Jesse T."/>
            <person name="Heijnen L."/>
            <person name="Schwarz S."/>
            <person name="Scholler P."/>
            <person name="Heber S."/>
            <person name="Francs P."/>
            <person name="Bielke C."/>
            <person name="Frishman D."/>
            <person name="Haase D."/>
            <person name="Lemcke K."/>
            <person name="Mewes H.-W."/>
            <person name="Stocker S."/>
            <person name="Zaccaria P."/>
            <person name="Bevan M."/>
            <person name="Wilson R.K."/>
            <person name="de la Bastide M."/>
            <person name="Habermann K."/>
            <person name="Parnell L."/>
            <person name="Dedhia N."/>
            <person name="Gnoj L."/>
            <person name="Schutz K."/>
            <person name="Huang E."/>
            <person name="Spiegel L."/>
            <person name="Sekhon M."/>
            <person name="Murray J."/>
            <person name="Sheet P."/>
            <person name="Cordes M."/>
            <person name="Abu-Threideh J."/>
            <person name="Stoneking T."/>
            <person name="Kalicki J."/>
            <person name="Graves T."/>
            <person name="Harmon G."/>
            <person name="Edwards J."/>
            <person name="Latreille P."/>
            <person name="Courtney L."/>
            <person name="Cloud J."/>
            <person name="Abbott A."/>
            <person name="Scott K."/>
            <person name="Johnson D."/>
            <person name="Minx P."/>
            <person name="Bentley D."/>
            <person name="Fulton B."/>
            <person name="Miller N."/>
            <person name="Greco T."/>
            <person name="Kemp K."/>
            <person name="Kramer J."/>
            <person name="Fulton L."/>
            <person name="Mardis E."/>
            <person name="Dante M."/>
            <person name="Pepin K."/>
            <person name="Hillier L.W."/>
            <person name="Nelson J."/>
            <person name="Spieth J."/>
            <person name="Ryan E."/>
            <person name="Andrews S."/>
            <person name="Geisel C."/>
            <person name="Layman D."/>
            <person name="Du H."/>
            <person name="Ali J."/>
            <person name="Berghoff A."/>
            <person name="Jones K."/>
            <person name="Drone K."/>
            <person name="Cotton M."/>
            <person name="Joshu C."/>
            <person name="Antonoiu B."/>
            <person name="Zidanic M."/>
            <person name="Strong C."/>
            <person name="Sun H."/>
            <person name="Lamar B."/>
            <person name="Yordan C."/>
            <person name="Ma P."/>
            <person name="Zhong J."/>
            <person name="Preston R."/>
            <person name="Vil D."/>
            <person name="Shekher M."/>
            <person name="Matero A."/>
            <person name="Shah R."/>
            <person name="Swaby I.K."/>
            <person name="O'Shaughnessy A."/>
            <person name="Rodriguez M."/>
            <person name="Hoffman J."/>
            <person name="Till S."/>
            <person name="Granat S."/>
            <person name="Shohdy N."/>
            <person name="Hasegawa A."/>
            <person name="Hameed A."/>
            <person name="Lodhi M."/>
            <person name="Johnson A."/>
            <person name="Chen E."/>
            <person name="Marra M.A."/>
            <person name="Martienssen R."/>
            <person name="McCombie W.R."/>
        </authorList>
    </citation>
    <scope>NUCLEOTIDE SEQUENCE [LARGE SCALE GENOMIC DNA]</scope>
    <source>
        <strain>cv. Columbia</strain>
    </source>
</reference>
<reference key="2">
    <citation type="journal article" date="2017" name="Plant J.">
        <title>Araport11: a complete reannotation of the Arabidopsis thaliana reference genome.</title>
        <authorList>
            <person name="Cheng C.Y."/>
            <person name="Krishnakumar V."/>
            <person name="Chan A.P."/>
            <person name="Thibaud-Nissen F."/>
            <person name="Schobel S."/>
            <person name="Town C.D."/>
        </authorList>
    </citation>
    <scope>GENOME REANNOTATION</scope>
    <source>
        <strain>cv. Columbia</strain>
    </source>
</reference>
<reference key="3">
    <citation type="journal article" date="2004" name="Genome Res.">
        <title>Whole genome sequence comparisons and 'full-length' cDNA sequences: a combined approach to evaluate and improve Arabidopsis genome annotation.</title>
        <authorList>
            <person name="Castelli V."/>
            <person name="Aury J.-M."/>
            <person name="Jaillon O."/>
            <person name="Wincker P."/>
            <person name="Clepet C."/>
            <person name="Menard M."/>
            <person name="Cruaud C."/>
            <person name="Quetier F."/>
            <person name="Scarpelli C."/>
            <person name="Schaechter V."/>
            <person name="Temple G."/>
            <person name="Caboche M."/>
            <person name="Weissenbach J."/>
            <person name="Salanoubat M."/>
        </authorList>
    </citation>
    <scope>NUCLEOTIDE SEQUENCE [LARGE SCALE MRNA]</scope>
    <source>
        <strain>cv. Columbia</strain>
    </source>
</reference>
<protein>
    <recommendedName>
        <fullName>UPF0496 protein At4g34320</fullName>
    </recommendedName>
</protein>
<gene>
    <name type="ordered locus">At4g34320</name>
    <name type="ORF">F10M10.90</name>
</gene>
<organism>
    <name type="scientific">Arabidopsis thaliana</name>
    <name type="common">Mouse-ear cress</name>
    <dbReference type="NCBI Taxonomy" id="3702"/>
    <lineage>
        <taxon>Eukaryota</taxon>
        <taxon>Viridiplantae</taxon>
        <taxon>Streptophyta</taxon>
        <taxon>Embryophyta</taxon>
        <taxon>Tracheophyta</taxon>
        <taxon>Spermatophyta</taxon>
        <taxon>Magnoliopsida</taxon>
        <taxon>eudicotyledons</taxon>
        <taxon>Gunneridae</taxon>
        <taxon>Pentapetalae</taxon>
        <taxon>rosids</taxon>
        <taxon>malvids</taxon>
        <taxon>Brassicales</taxon>
        <taxon>Brassicaceae</taxon>
        <taxon>Camelineae</taxon>
        <taxon>Arabidopsis</taxon>
    </lineage>
</organism>
<proteinExistence type="evidence at transcript level"/>
<accession>Q9SYZ7</accession>
<comment type="subcellular location">
    <subcellularLocation>
        <location evidence="2">Membrane</location>
        <topology evidence="2">Multi-pass membrane protein</topology>
    </subcellularLocation>
</comment>
<comment type="similarity">
    <text evidence="2">Belongs to the UPF0496 family.</text>
</comment>
<dbReference type="EMBL" id="AL035521">
    <property type="protein sequence ID" value="CAB36709.1"/>
    <property type="molecule type" value="Genomic_DNA"/>
</dbReference>
<dbReference type="EMBL" id="AL161585">
    <property type="protein sequence ID" value="CAB80149.1"/>
    <property type="molecule type" value="Genomic_DNA"/>
</dbReference>
<dbReference type="EMBL" id="CP002687">
    <property type="protein sequence ID" value="AEE86359.1"/>
    <property type="molecule type" value="Genomic_DNA"/>
</dbReference>
<dbReference type="EMBL" id="CP002687">
    <property type="protein sequence ID" value="ANM66891.1"/>
    <property type="molecule type" value="Genomic_DNA"/>
</dbReference>
<dbReference type="EMBL" id="BX828285">
    <property type="status" value="NOT_ANNOTATED_CDS"/>
    <property type="molecule type" value="mRNA"/>
</dbReference>
<dbReference type="PIR" id="T04778">
    <property type="entry name" value="T04778"/>
</dbReference>
<dbReference type="RefSeq" id="NP_001328759.1">
    <property type="nucleotide sequence ID" value="NM_001342278.1"/>
</dbReference>
<dbReference type="RefSeq" id="NP_195158.1">
    <property type="nucleotide sequence ID" value="NM_119597.4"/>
</dbReference>
<dbReference type="SMR" id="Q9SYZ7"/>
<dbReference type="FunCoup" id="Q9SYZ7">
    <property type="interactions" value="5"/>
</dbReference>
<dbReference type="STRING" id="3702.Q9SYZ7"/>
<dbReference type="iPTMnet" id="Q9SYZ7"/>
<dbReference type="PaxDb" id="3702-AT4G34320.1"/>
<dbReference type="ProteomicsDB" id="228707"/>
<dbReference type="DNASU" id="829582"/>
<dbReference type="EnsemblPlants" id="AT4G34320.1">
    <property type="protein sequence ID" value="AT4G34320.1"/>
    <property type="gene ID" value="AT4G34320"/>
</dbReference>
<dbReference type="EnsemblPlants" id="AT4G34320.2">
    <property type="protein sequence ID" value="AT4G34320.2"/>
    <property type="gene ID" value="AT4G34320"/>
</dbReference>
<dbReference type="GeneID" id="829582"/>
<dbReference type="Gramene" id="AT4G34320.1">
    <property type="protein sequence ID" value="AT4G34320.1"/>
    <property type="gene ID" value="AT4G34320"/>
</dbReference>
<dbReference type="Gramene" id="AT4G34320.2">
    <property type="protein sequence ID" value="AT4G34320.2"/>
    <property type="gene ID" value="AT4G34320"/>
</dbReference>
<dbReference type="KEGG" id="ath:AT4G34320"/>
<dbReference type="Araport" id="AT4G34320"/>
<dbReference type="TAIR" id="AT4G34320"/>
<dbReference type="eggNOG" id="ENOG502QQBT">
    <property type="taxonomic scope" value="Eukaryota"/>
</dbReference>
<dbReference type="HOGENOM" id="CLU_044778_0_0_1"/>
<dbReference type="InParanoid" id="Q9SYZ7"/>
<dbReference type="OMA" id="NAFHDIC"/>
<dbReference type="OrthoDB" id="679959at2759"/>
<dbReference type="PhylomeDB" id="Q9SYZ7"/>
<dbReference type="PRO" id="PR:Q9SYZ7"/>
<dbReference type="Proteomes" id="UP000006548">
    <property type="component" value="Chromosome 4"/>
</dbReference>
<dbReference type="ExpressionAtlas" id="Q9SYZ7">
    <property type="expression patterns" value="baseline and differential"/>
</dbReference>
<dbReference type="GO" id="GO:0016020">
    <property type="term" value="C:membrane"/>
    <property type="evidence" value="ECO:0007669"/>
    <property type="project" value="UniProtKB-SubCell"/>
</dbReference>
<dbReference type="InterPro" id="IPR007749">
    <property type="entry name" value="DUF677"/>
</dbReference>
<dbReference type="PANTHER" id="PTHR31113:SF3">
    <property type="entry name" value="UPF0496 PROTEIN 1"/>
    <property type="match status" value="1"/>
</dbReference>
<dbReference type="PANTHER" id="PTHR31113">
    <property type="entry name" value="UPF0496 PROTEIN 3-RELATED"/>
    <property type="match status" value="1"/>
</dbReference>
<dbReference type="Pfam" id="PF05055">
    <property type="entry name" value="DUF677"/>
    <property type="match status" value="1"/>
</dbReference>